<dbReference type="EC" id="1.3.1.42"/>
<dbReference type="EMBL" id="AJ278332">
    <property type="protein sequence ID" value="CAC21424.1"/>
    <property type="molecule type" value="mRNA"/>
</dbReference>
<dbReference type="RefSeq" id="NP_001233873.1">
    <property type="nucleotide sequence ID" value="NM_001246944.2"/>
</dbReference>
<dbReference type="PDB" id="2HS6">
    <property type="method" value="X-ray"/>
    <property type="resolution" value="1.90 A"/>
    <property type="chains" value="A/B=1-396"/>
</dbReference>
<dbReference type="PDB" id="2HS8">
    <property type="method" value="X-ray"/>
    <property type="resolution" value="1.90 A"/>
    <property type="chains" value="A/B=1-396"/>
</dbReference>
<dbReference type="PDB" id="2HSA">
    <property type="method" value="X-ray"/>
    <property type="resolution" value="1.50 A"/>
    <property type="chains" value="A/B=1-396"/>
</dbReference>
<dbReference type="PDB" id="3HGO">
    <property type="method" value="X-ray"/>
    <property type="resolution" value="2.30 A"/>
    <property type="chains" value="A/B=1-396"/>
</dbReference>
<dbReference type="PDB" id="3HGS">
    <property type="method" value="X-ray"/>
    <property type="resolution" value="2.00 A"/>
    <property type="chains" value="A/B=1-396"/>
</dbReference>
<dbReference type="PDB" id="8AUA">
    <property type="method" value="X-ray"/>
    <property type="resolution" value="1.90 A"/>
    <property type="chains" value="A/B=1-396"/>
</dbReference>
<dbReference type="PDB" id="8AUB">
    <property type="method" value="X-ray"/>
    <property type="resolution" value="1.62 A"/>
    <property type="chains" value="A/B=1-396"/>
</dbReference>
<dbReference type="PDB" id="8AUE">
    <property type="method" value="X-ray"/>
    <property type="resolution" value="1.82 A"/>
    <property type="chains" value="A/B=1-396"/>
</dbReference>
<dbReference type="PDB" id="8AUJ">
    <property type="method" value="X-ray"/>
    <property type="resolution" value="1.57 A"/>
    <property type="chains" value="A/B=1-396"/>
</dbReference>
<dbReference type="PDB" id="8AUL">
    <property type="method" value="X-ray"/>
    <property type="resolution" value="1.50 A"/>
    <property type="chains" value="A/B=1-396"/>
</dbReference>
<dbReference type="PDB" id="8AUM">
    <property type="method" value="X-ray"/>
    <property type="resolution" value="1.35 A"/>
    <property type="chains" value="A/B=1-396"/>
</dbReference>
<dbReference type="PDB" id="8AUN">
    <property type="method" value="X-ray"/>
    <property type="resolution" value="1.49 A"/>
    <property type="chains" value="A/B=1-396"/>
</dbReference>
<dbReference type="PDB" id="8AUO">
    <property type="method" value="X-ray"/>
    <property type="resolution" value="1.58 A"/>
    <property type="chains" value="A/B=1-396"/>
</dbReference>
<dbReference type="PDB" id="8AUQ">
    <property type="method" value="X-ray"/>
    <property type="resolution" value="1.42 A"/>
    <property type="chains" value="A/B=1-396"/>
</dbReference>
<dbReference type="PDB" id="8QMX">
    <property type="method" value="X-ray"/>
    <property type="resolution" value="1.40 A"/>
    <property type="chains" value="A/B=1-396"/>
</dbReference>
<dbReference type="PDB" id="8QN1">
    <property type="method" value="X-ray"/>
    <property type="resolution" value="1.75 A"/>
    <property type="chains" value="A/B/C/D=10-384"/>
</dbReference>
<dbReference type="PDB" id="8QN3">
    <property type="method" value="X-ray"/>
    <property type="resolution" value="1.75 A"/>
    <property type="chains" value="A/B=1-396"/>
</dbReference>
<dbReference type="PDB" id="8QN9">
    <property type="method" value="X-ray"/>
    <property type="resolution" value="1.60 A"/>
    <property type="chains" value="B=1-396"/>
</dbReference>
<dbReference type="PDB" id="8S8V">
    <property type="method" value="X-ray"/>
    <property type="resolution" value="3.00 A"/>
    <property type="chains" value="A/B=1-396"/>
</dbReference>
<dbReference type="PDB" id="8S8Y">
    <property type="method" value="X-ray"/>
    <property type="resolution" value="1.80 A"/>
    <property type="chains" value="A/B=1-396"/>
</dbReference>
<dbReference type="PDB" id="9EM0">
    <property type="method" value="X-ray"/>
    <property type="resolution" value="2.20 A"/>
    <property type="chains" value="A/B=1-396"/>
</dbReference>
<dbReference type="PDB" id="9EM2">
    <property type="method" value="X-ray"/>
    <property type="resolution" value="1.54 A"/>
    <property type="chains" value="A/B=1-396"/>
</dbReference>
<dbReference type="PDB" id="9EM3">
    <property type="method" value="X-ray"/>
    <property type="resolution" value="2.27 A"/>
    <property type="chains" value="A=1-396"/>
</dbReference>
<dbReference type="PDB" id="9EM4">
    <property type="method" value="X-ray"/>
    <property type="resolution" value="2.01 A"/>
    <property type="chains" value="A/B=1-396"/>
</dbReference>
<dbReference type="PDB" id="9EM5">
    <property type="method" value="X-ray"/>
    <property type="resolution" value="1.60 A"/>
    <property type="chains" value="A=1-396"/>
</dbReference>
<dbReference type="PDB" id="9EM6">
    <property type="method" value="X-ray"/>
    <property type="resolution" value="1.72 A"/>
    <property type="chains" value="A/B=1-396"/>
</dbReference>
<dbReference type="PDBsum" id="2HS6"/>
<dbReference type="PDBsum" id="2HS8"/>
<dbReference type="PDBsum" id="2HSA"/>
<dbReference type="PDBsum" id="3HGO"/>
<dbReference type="PDBsum" id="3HGS"/>
<dbReference type="PDBsum" id="8AUA"/>
<dbReference type="PDBsum" id="8AUB"/>
<dbReference type="PDBsum" id="8AUE"/>
<dbReference type="PDBsum" id="8AUJ"/>
<dbReference type="PDBsum" id="8AUL"/>
<dbReference type="PDBsum" id="8AUM"/>
<dbReference type="PDBsum" id="8AUN"/>
<dbReference type="PDBsum" id="8AUO"/>
<dbReference type="PDBsum" id="8AUQ"/>
<dbReference type="PDBsum" id="8QMX"/>
<dbReference type="PDBsum" id="8QN1"/>
<dbReference type="PDBsum" id="8QN3"/>
<dbReference type="PDBsum" id="8QN9"/>
<dbReference type="PDBsum" id="8S8V"/>
<dbReference type="PDBsum" id="8S8Y"/>
<dbReference type="PDBsum" id="9EM0"/>
<dbReference type="PDBsum" id="9EM2"/>
<dbReference type="PDBsum" id="9EM3"/>
<dbReference type="PDBsum" id="9EM4"/>
<dbReference type="PDBsum" id="9EM5"/>
<dbReference type="PDBsum" id="9EM6"/>
<dbReference type="SMR" id="Q9FEW9"/>
<dbReference type="DIP" id="DIP-61271N"/>
<dbReference type="FunCoup" id="Q9FEW9">
    <property type="interactions" value="188"/>
</dbReference>
<dbReference type="STRING" id="4081.Q9FEW9"/>
<dbReference type="PaxDb" id="4081-Solyc07g007870.2.1"/>
<dbReference type="EnsemblPlants" id="Solyc07g007870.3.1">
    <property type="protein sequence ID" value="Solyc07g007870.3.1"/>
    <property type="gene ID" value="Solyc07g007870.3"/>
</dbReference>
<dbReference type="GeneID" id="543763"/>
<dbReference type="Gramene" id="Solyc07g007870.3.1">
    <property type="protein sequence ID" value="Solyc07g007870.3.1"/>
    <property type="gene ID" value="Solyc07g007870.3"/>
</dbReference>
<dbReference type="KEGG" id="sly:543763"/>
<dbReference type="eggNOG" id="KOG0134">
    <property type="taxonomic scope" value="Eukaryota"/>
</dbReference>
<dbReference type="HOGENOM" id="CLU_012153_0_2_1"/>
<dbReference type="InParanoid" id="Q9FEW9"/>
<dbReference type="OMA" id="GKGPVGY"/>
<dbReference type="OrthoDB" id="1663137at2759"/>
<dbReference type="PhylomeDB" id="Q9FEW9"/>
<dbReference type="BRENDA" id="1.3.1.42">
    <property type="organism ID" value="3101"/>
</dbReference>
<dbReference type="UniPathway" id="UPA00382"/>
<dbReference type="EvolutionaryTrace" id="Q9FEW9"/>
<dbReference type="Proteomes" id="UP000004994">
    <property type="component" value="Chromosome 7"/>
</dbReference>
<dbReference type="GO" id="GO:0005777">
    <property type="term" value="C:peroxisome"/>
    <property type="evidence" value="ECO:0000318"/>
    <property type="project" value="GO_Central"/>
</dbReference>
<dbReference type="GO" id="GO:0016629">
    <property type="term" value="F:12-oxophytodienoate reductase activity"/>
    <property type="evidence" value="ECO:0000318"/>
    <property type="project" value="GO_Central"/>
</dbReference>
<dbReference type="GO" id="GO:0010181">
    <property type="term" value="F:FMN binding"/>
    <property type="evidence" value="ECO:0007669"/>
    <property type="project" value="InterPro"/>
</dbReference>
<dbReference type="GO" id="GO:0042802">
    <property type="term" value="F:identical protein binding"/>
    <property type="evidence" value="ECO:0000353"/>
    <property type="project" value="IntAct"/>
</dbReference>
<dbReference type="GO" id="GO:0009695">
    <property type="term" value="P:jasmonic acid biosynthetic process"/>
    <property type="evidence" value="ECO:0000318"/>
    <property type="project" value="GO_Central"/>
</dbReference>
<dbReference type="GO" id="GO:0031408">
    <property type="term" value="P:oxylipin biosynthetic process"/>
    <property type="evidence" value="ECO:0000318"/>
    <property type="project" value="GO_Central"/>
</dbReference>
<dbReference type="CDD" id="cd02933">
    <property type="entry name" value="OYE_like_FMN"/>
    <property type="match status" value="1"/>
</dbReference>
<dbReference type="FunFam" id="3.20.20.70:FF:000073">
    <property type="entry name" value="12-oxophytodienoate reductase 3"/>
    <property type="match status" value="1"/>
</dbReference>
<dbReference type="Gene3D" id="3.20.20.70">
    <property type="entry name" value="Aldolase class I"/>
    <property type="match status" value="1"/>
</dbReference>
<dbReference type="InterPro" id="IPR013785">
    <property type="entry name" value="Aldolase_TIM"/>
</dbReference>
<dbReference type="InterPro" id="IPR001155">
    <property type="entry name" value="OxRdtase_FMN_N"/>
</dbReference>
<dbReference type="InterPro" id="IPR045247">
    <property type="entry name" value="Oye-like"/>
</dbReference>
<dbReference type="PANTHER" id="PTHR22893:SF112">
    <property type="entry name" value="12-OXOPHYTODIENOATE REDUCTASE 3"/>
    <property type="match status" value="1"/>
</dbReference>
<dbReference type="PANTHER" id="PTHR22893">
    <property type="entry name" value="NADH OXIDOREDUCTASE-RELATED"/>
    <property type="match status" value="1"/>
</dbReference>
<dbReference type="Pfam" id="PF00724">
    <property type="entry name" value="Oxidored_FMN"/>
    <property type="match status" value="1"/>
</dbReference>
<dbReference type="SUPFAM" id="SSF51395">
    <property type="entry name" value="FMN-linked oxidoreductases"/>
    <property type="match status" value="1"/>
</dbReference>
<protein>
    <recommendedName>
        <fullName>12-oxophytodienoate reductase 3</fullName>
        <ecNumber>1.3.1.42</ecNumber>
    </recommendedName>
    <alternativeName>
        <fullName>12-oxophytodienoate-10,11-reductase 3</fullName>
        <shortName>OPDA-reductase 3</shortName>
    </alternativeName>
    <alternativeName>
        <fullName>LeOPR3</fullName>
    </alternativeName>
</protein>
<name>OPR3_SOLLC</name>
<feature type="chain" id="PRO_0000194489" description="12-oxophytodienoate reductase 3">
    <location>
        <begin position="1"/>
        <end position="396"/>
    </location>
</feature>
<feature type="region of interest" description="FMN">
    <location>
        <begin position="342"/>
        <end position="343"/>
    </location>
</feature>
<feature type="short sequence motif" description="Microbody targeting signal" evidence="2">
    <location>
        <begin position="394"/>
        <end position="396"/>
    </location>
</feature>
<feature type="active site" description="Proton donor" evidence="1">
    <location>
        <position position="190"/>
    </location>
</feature>
<feature type="binding site" evidence="4 5">
    <location>
        <begin position="31"/>
        <end position="33"/>
    </location>
    <ligand>
        <name>FMN</name>
        <dbReference type="ChEBI" id="CHEBI:58210"/>
    </ligand>
</feature>
<feature type="binding site" evidence="4 5">
    <location>
        <position position="64"/>
    </location>
    <ligand>
        <name>FMN</name>
        <dbReference type="ChEBI" id="CHEBI:58210"/>
    </ligand>
</feature>
<feature type="binding site" evidence="4 5">
    <location>
        <position position="106"/>
    </location>
    <ligand>
        <name>FMN</name>
        <dbReference type="ChEBI" id="CHEBI:58210"/>
    </ligand>
</feature>
<feature type="binding site" evidence="1">
    <location>
        <begin position="185"/>
        <end position="188"/>
    </location>
    <ligand>
        <name>substrate</name>
    </ligand>
</feature>
<feature type="binding site" evidence="4 5">
    <location>
        <position position="237"/>
    </location>
    <ligand>
        <name>FMN</name>
        <dbReference type="ChEBI" id="CHEBI:58210"/>
    </ligand>
</feature>
<feature type="binding site" evidence="1">
    <location>
        <position position="283"/>
    </location>
    <ligand>
        <name>substrate</name>
    </ligand>
</feature>
<feature type="binding site" evidence="4 5">
    <location>
        <position position="321"/>
    </location>
    <ligand>
        <name>FMN</name>
        <dbReference type="ChEBI" id="CHEBI:58210"/>
    </ligand>
</feature>
<feature type="binding site" evidence="1">
    <location>
        <begin position="342"/>
        <end position="343"/>
    </location>
    <ligand>
        <name>FMN</name>
        <dbReference type="ChEBI" id="CHEBI:58210"/>
    </ligand>
</feature>
<feature type="helix" evidence="9">
    <location>
        <begin position="11"/>
        <end position="13"/>
    </location>
</feature>
<feature type="strand" evidence="9">
    <location>
        <begin position="16"/>
        <end position="18"/>
    </location>
</feature>
<feature type="strand" evidence="9">
    <location>
        <begin position="21"/>
        <end position="24"/>
    </location>
</feature>
<feature type="strand" evidence="9">
    <location>
        <begin position="26"/>
        <end position="29"/>
    </location>
</feature>
<feature type="helix" evidence="9">
    <location>
        <begin position="38"/>
        <end position="40"/>
    </location>
</feature>
<feature type="helix" evidence="9">
    <location>
        <begin position="44"/>
        <end position="53"/>
    </location>
</feature>
<feature type="strand" evidence="9">
    <location>
        <begin position="59"/>
        <end position="61"/>
    </location>
</feature>
<feature type="strand" evidence="9">
    <location>
        <begin position="65"/>
        <end position="68"/>
    </location>
</feature>
<feature type="helix" evidence="12">
    <location>
        <begin position="69"/>
        <end position="71"/>
    </location>
</feature>
<feature type="strand" evidence="7">
    <location>
        <begin position="74"/>
        <end position="76"/>
    </location>
</feature>
<feature type="strand" evidence="8">
    <location>
        <begin position="79"/>
        <end position="82"/>
    </location>
</feature>
<feature type="helix" evidence="9">
    <location>
        <begin position="83"/>
        <end position="98"/>
    </location>
</feature>
<feature type="strand" evidence="9">
    <location>
        <begin position="102"/>
        <end position="108"/>
    </location>
</feature>
<feature type="helix" evidence="9">
    <location>
        <begin position="116"/>
        <end position="118"/>
    </location>
</feature>
<feature type="helix" evidence="9">
    <location>
        <begin position="120"/>
        <end position="122"/>
    </location>
</feature>
<feature type="strand" evidence="9">
    <location>
        <begin position="126"/>
        <end position="130"/>
    </location>
</feature>
<feature type="strand" evidence="9">
    <location>
        <begin position="137"/>
        <end position="140"/>
    </location>
</feature>
<feature type="strand" evidence="9">
    <location>
        <begin position="146"/>
        <end position="148"/>
    </location>
</feature>
<feature type="helix" evidence="9">
    <location>
        <begin position="157"/>
        <end position="176"/>
    </location>
</feature>
<feature type="strand" evidence="9">
    <location>
        <begin position="180"/>
        <end position="186"/>
    </location>
</feature>
<feature type="helix" evidence="9">
    <location>
        <begin position="191"/>
        <end position="196"/>
    </location>
</feature>
<feature type="turn" evidence="9">
    <location>
        <begin position="198"/>
        <end position="200"/>
    </location>
</feature>
<feature type="strand" evidence="9">
    <location>
        <begin position="208"/>
        <end position="210"/>
    </location>
</feature>
<feature type="helix" evidence="9">
    <location>
        <begin position="211"/>
        <end position="214"/>
    </location>
</feature>
<feature type="helix" evidence="9">
    <location>
        <begin position="216"/>
        <end position="229"/>
    </location>
</feature>
<feature type="helix" evidence="9">
    <location>
        <begin position="231"/>
        <end position="233"/>
    </location>
</feature>
<feature type="strand" evidence="9">
    <location>
        <begin position="234"/>
        <end position="238"/>
    </location>
</feature>
<feature type="strand" evidence="9">
    <location>
        <begin position="244"/>
        <end position="246"/>
    </location>
</feature>
<feature type="helix" evidence="9">
    <location>
        <begin position="252"/>
        <end position="270"/>
    </location>
</feature>
<feature type="strand" evidence="9">
    <location>
        <begin position="275"/>
        <end position="280"/>
    </location>
</feature>
<feature type="strand" evidence="10">
    <location>
        <begin position="286"/>
        <end position="288"/>
    </location>
</feature>
<feature type="turn" evidence="12">
    <location>
        <begin position="289"/>
        <end position="291"/>
    </location>
</feature>
<feature type="helix" evidence="10">
    <location>
        <begin position="292"/>
        <end position="294"/>
    </location>
</feature>
<feature type="helix" evidence="11">
    <location>
        <begin position="295"/>
        <end position="297"/>
    </location>
</feature>
<feature type="helix" evidence="9">
    <location>
        <begin position="298"/>
        <end position="311"/>
    </location>
</feature>
<feature type="strand" evidence="10">
    <location>
        <begin position="312"/>
        <end position="314"/>
    </location>
</feature>
<feature type="strand" evidence="9">
    <location>
        <begin position="316"/>
        <end position="321"/>
    </location>
</feature>
<feature type="helix" evidence="9">
    <location>
        <begin position="324"/>
        <end position="332"/>
    </location>
</feature>
<feature type="strand" evidence="9">
    <location>
        <begin position="337"/>
        <end position="342"/>
    </location>
</feature>
<feature type="helix" evidence="9">
    <location>
        <begin position="343"/>
        <end position="347"/>
    </location>
</feature>
<feature type="helix" evidence="9">
    <location>
        <begin position="351"/>
        <end position="357"/>
    </location>
</feature>
<feature type="helix" evidence="9">
    <location>
        <begin position="366"/>
        <end position="368"/>
    </location>
</feature>
<feature type="turn" evidence="9">
    <location>
        <begin position="376"/>
        <end position="378"/>
    </location>
</feature>
<comment type="function">
    <text evidence="1">Specifically cleaves olefinic bonds in cyclic enones. Involved in the biosynthesis of jasmonic acid (JA) and perhaps in biosynthesis or metabolism of other oxylipin signaling moleclules. It is required for the spatial and temporal regulation of JA levels during dehiscence of anthers, promoting the stomium degeneration program (By similarity). In vitro, reduces 9S,13S-12-oxophytodienoic acid (9S,13S-OPDA) and 9R,13R-OPDA to 9S,13S-OPC-8:0 and 9R,13R-OPC-8:0, respectively.</text>
</comment>
<comment type="catalytic activity">
    <reaction>
        <text>(1S,2S)-OPC-8 + NADP(+) = (9S,13S,15Z)-12-oxophyto-10,15-dienoate + NADPH + H(+)</text>
        <dbReference type="Rhea" id="RHEA:21888"/>
        <dbReference type="ChEBI" id="CHEBI:15378"/>
        <dbReference type="ChEBI" id="CHEBI:57411"/>
        <dbReference type="ChEBI" id="CHEBI:57783"/>
        <dbReference type="ChEBI" id="CHEBI:58349"/>
        <dbReference type="ChEBI" id="CHEBI:191855"/>
        <dbReference type="EC" id="1.3.1.42"/>
    </reaction>
</comment>
<comment type="cofactor">
    <cofactor evidence="1">
        <name>FMN</name>
        <dbReference type="ChEBI" id="CHEBI:58210"/>
    </cofactor>
</comment>
<comment type="pathway">
    <text>Lipid metabolism; oxylipin biosynthesis.</text>
</comment>
<comment type="interaction">
    <interactant intactId="EBI-15601730">
        <id>Q9FEW9</id>
    </interactant>
    <interactant intactId="EBI-15601730">
        <id>Q9FEW9</id>
        <label>OPR3</label>
    </interactant>
    <organismsDiffer>false</organismsDiffer>
    <experiments>4</experiments>
</comment>
<comment type="subcellular location">
    <subcellularLocation>
        <location evidence="3">Peroxisome</location>
    </subcellularLocation>
</comment>
<comment type="tissue specificity">
    <text>Expressed in roots and to a lower extent in leaves and flowers.</text>
</comment>
<comment type="induction">
    <text>By wounding, locally and systemically.</text>
</comment>
<comment type="similarity">
    <text evidence="6">Belongs to the NADH:flavin oxidoreductase/NADH oxidase family.</text>
</comment>
<accession>Q9FEW9</accession>
<evidence type="ECO:0000250" key="1"/>
<evidence type="ECO:0000255" key="2"/>
<evidence type="ECO:0000269" key="3">
    <source>
    </source>
</evidence>
<evidence type="ECO:0000269" key="4">
    <source>
    </source>
</evidence>
<evidence type="ECO:0000269" key="5">
    <source>
    </source>
</evidence>
<evidence type="ECO:0000305" key="6"/>
<evidence type="ECO:0007829" key="7">
    <source>
        <dbReference type="PDB" id="2HS8"/>
    </source>
</evidence>
<evidence type="ECO:0007829" key="8">
    <source>
        <dbReference type="PDB" id="8AUL"/>
    </source>
</evidence>
<evidence type="ECO:0007829" key="9">
    <source>
        <dbReference type="PDB" id="8AUM"/>
    </source>
</evidence>
<evidence type="ECO:0007829" key="10">
    <source>
        <dbReference type="PDB" id="8QMX"/>
    </source>
</evidence>
<evidence type="ECO:0007829" key="11">
    <source>
        <dbReference type="PDB" id="8S8Y"/>
    </source>
</evidence>
<evidence type="ECO:0007829" key="12">
    <source>
        <dbReference type="PDB" id="9EM0"/>
    </source>
</evidence>
<reference key="1">
    <citation type="journal article" date="2002" name="Plant J.">
        <title>Characterization and cDNA-microarray expression analysis of 12-oxophytodienoate reductases reveals differential roles for octadecanoid biosynthesis in the local versus the systemic wound response.</title>
        <authorList>
            <person name="Strassner J."/>
            <person name="Schaller F."/>
            <person name="Frick U.B."/>
            <person name="Howe G.A."/>
            <person name="Weiler E.W."/>
            <person name="Amrhein N."/>
            <person name="Macheroux P."/>
            <person name="Schaller A."/>
        </authorList>
    </citation>
    <scope>NUCLEOTIDE SEQUENCE [MRNA]</scope>
    <scope>COFACTOR</scope>
    <scope>SUBSTRATE SPECIFICITY</scope>
    <scope>SUBCELLULAR LOCATION</scope>
    <source>
        <strain>cv. Castlemart II</strain>
        <tissue>Shoot</tissue>
    </source>
</reference>
<reference key="2">
    <citation type="journal article" date="2006" name="Proc. Natl. Acad. Sci. U.S.A.">
        <title>Crystal structure of 12-oxophytodienoate reductase 3 from tomato: self-inhibition by dimerization.</title>
        <authorList>
            <person name="Breithaupt C."/>
            <person name="Kurzbauer R."/>
            <person name="Lilie H."/>
            <person name="Schaller A."/>
            <person name="Strassner J."/>
            <person name="Huber R."/>
            <person name="Macheroux P."/>
            <person name="Clausen T."/>
        </authorList>
    </citation>
    <scope>X-RAY CRYSTALLOGRAPHY (1.50 ANGSTROMS) IN COMPLEX WITH FMN</scope>
</reference>
<reference key="3">
    <citation type="journal article" date="2009" name="J. Mol. Biol.">
        <title>Structural basis of substrate specificity of plant 12-oxophytodienoate reductases.</title>
        <authorList>
            <person name="Breithaupt C."/>
            <person name="Kurzbauer R."/>
            <person name="Schaller F."/>
            <person name="Stintzi A."/>
            <person name="Schaller A."/>
            <person name="Huber R."/>
            <person name="Macheroux P."/>
            <person name="Clausen T."/>
        </authorList>
    </citation>
    <scope>X-RAY CRYSTALLOGRAPHY (2.00 ANGSTROMS) IN COMPLEX WITH FMN</scope>
</reference>
<proteinExistence type="evidence at protein level"/>
<organism>
    <name type="scientific">Solanum lycopersicum</name>
    <name type="common">Tomato</name>
    <name type="synonym">Lycopersicon esculentum</name>
    <dbReference type="NCBI Taxonomy" id="4081"/>
    <lineage>
        <taxon>Eukaryota</taxon>
        <taxon>Viridiplantae</taxon>
        <taxon>Streptophyta</taxon>
        <taxon>Embryophyta</taxon>
        <taxon>Tracheophyta</taxon>
        <taxon>Spermatophyta</taxon>
        <taxon>Magnoliopsida</taxon>
        <taxon>eudicotyledons</taxon>
        <taxon>Gunneridae</taxon>
        <taxon>Pentapetalae</taxon>
        <taxon>asterids</taxon>
        <taxon>lamiids</taxon>
        <taxon>Solanales</taxon>
        <taxon>Solanaceae</taxon>
        <taxon>Solanoideae</taxon>
        <taxon>Solaneae</taxon>
        <taxon>Solanum</taxon>
        <taxon>Solanum subgen. Lycopersicon</taxon>
    </lineage>
</organism>
<keyword id="KW-0002">3D-structure</keyword>
<keyword id="KW-0275">Fatty acid biosynthesis</keyword>
<keyword id="KW-0276">Fatty acid metabolism</keyword>
<keyword id="KW-0285">Flavoprotein</keyword>
<keyword id="KW-0288">FMN</keyword>
<keyword id="KW-0444">Lipid biosynthesis</keyword>
<keyword id="KW-0443">Lipid metabolism</keyword>
<keyword id="KW-0521">NADP</keyword>
<keyword id="KW-0560">Oxidoreductase</keyword>
<keyword id="KW-0925">Oxylipin biosynthesis</keyword>
<keyword id="KW-0576">Peroxisome</keyword>
<keyword id="KW-1185">Reference proteome</keyword>
<sequence>MASSAQDGNNPLFSPYKMGKFNLSHRVVLAPMTRCRALNNIPQAALGEYYEQRATAGGFLITEGTMISPTSAGFPHVPGIFTKEQVREWKKIVDVVHAKGAVIFCQLWHVGRASHEVYQPAGAAPISSTEKPISNRWRILMPDGTHGIYPKPRAIGTYEISQVVEDYRRSALNAIEAGFDGIEIHGAHGYLIDQFLKDGINDRTDEYGGSLANRCKFITQVVQAVVSAIGADRVGVRVSPAIDHLDAMDSNPLSLGLAVVERLNKIQLHSGSKLAYLHVTQPRYVAYGQTEAGRLGSEEEEARLMRTLRNAYQGTFICSGGYTRELGIEAVAQGDADLVSYGRLFISNPDLVMRIKLNAPLNKYNRKTFYTQDPVVGYTDYPFLQGNGSNGPLSRL</sequence>
<gene>
    <name type="primary">OPR3</name>
</gene>